<sequence length="310" mass="34662">MDNYTLLNEFILLGIPQTQGLETLLFVVFLFIYFFTLLGNSLIFTAIISSSTLHTPMYFFLGLLSVFDMLFPSVTCPKMLFYLSVRSPAISYKGCAAQLFFYHLLGSTEGCLYSVMAYDRYVAICHPLRYMLIMKPGVCVSLVIIAWLVGCLHATILTSLTFQLVYCASNQVDYFFCDLPAVLPLACTDSKLARKVGSINVGFLALMLLFSVCVSYVHIGVAILRIRSAEGRQKAFSTCSAHLTAILCAYGPVIIIYLQRTPNPLLGAVVQILNNIVSPMLNSLIYSLRNKEVKRSLRRVFQNITFHGQK</sequence>
<feature type="chain" id="PRO_0000150825" description="Olfactory receptor 10N1">
    <location>
        <begin position="1"/>
        <end position="310"/>
    </location>
</feature>
<feature type="topological domain" description="Extracellular" evidence="1">
    <location>
        <begin position="1"/>
        <end position="23"/>
    </location>
</feature>
<feature type="transmembrane region" description="Helical; Name=1" evidence="1">
    <location>
        <begin position="24"/>
        <end position="44"/>
    </location>
</feature>
<feature type="topological domain" description="Cytoplasmic" evidence="1">
    <location>
        <begin position="45"/>
        <end position="55"/>
    </location>
</feature>
<feature type="transmembrane region" description="Helical; Name=2" evidence="1">
    <location>
        <begin position="56"/>
        <end position="76"/>
    </location>
</feature>
<feature type="topological domain" description="Extracellular" evidence="1">
    <location>
        <begin position="77"/>
        <end position="95"/>
    </location>
</feature>
<feature type="transmembrane region" description="Helical; Name=3" evidence="1">
    <location>
        <begin position="96"/>
        <end position="116"/>
    </location>
</feature>
<feature type="topological domain" description="Cytoplasmic" evidence="1">
    <location>
        <begin position="117"/>
        <end position="136"/>
    </location>
</feature>
<feature type="transmembrane region" description="Helical; Name=4" evidence="1">
    <location>
        <begin position="137"/>
        <end position="157"/>
    </location>
</feature>
<feature type="topological domain" description="Extracellular" evidence="1">
    <location>
        <begin position="158"/>
        <end position="202"/>
    </location>
</feature>
<feature type="transmembrane region" description="Helical; Name=5" evidence="1">
    <location>
        <begin position="203"/>
        <end position="223"/>
    </location>
</feature>
<feature type="topological domain" description="Cytoplasmic" evidence="1">
    <location>
        <begin position="224"/>
        <end position="237"/>
    </location>
</feature>
<feature type="transmembrane region" description="Helical; Name=6" evidence="1">
    <location>
        <begin position="238"/>
        <end position="258"/>
    </location>
</feature>
<feature type="topological domain" description="Extracellular" evidence="1">
    <location>
        <begin position="259"/>
        <end position="264"/>
    </location>
</feature>
<feature type="transmembrane region" description="Helical; Name=7" evidence="1">
    <location>
        <begin position="265"/>
        <end position="285"/>
    </location>
</feature>
<feature type="topological domain" description="Cytoplasmic" evidence="1">
    <location>
        <begin position="286"/>
        <end position="310"/>
    </location>
</feature>
<feature type="glycosylation site" description="N-linked (GlcNAc...) asparagine" evidence="1">
    <location>
        <position position="3"/>
    </location>
</feature>
<feature type="disulfide bond" evidence="2">
    <location>
        <begin position="95"/>
        <end position="187"/>
    </location>
</feature>
<name>O10N1_MOUSE</name>
<accession>Q60887</accession>
<accession>Q9EQ88</accession>
<proteinExistence type="inferred from homology"/>
<reference key="1">
    <citation type="journal article" date="2000" name="Mamm. Genome">
        <title>Characterization of a cluster comprising 100 odorant receptor genes in mouse.</title>
        <authorList>
            <person name="Xie S.Y."/>
            <person name="Feinstein P."/>
            <person name="Mombaerts P."/>
        </authorList>
    </citation>
    <scope>NUCLEOTIDE SEQUENCE [GENOMIC DNA]</scope>
    <source>
        <strain>129/SvJ</strain>
    </source>
</reference>
<reference key="2">
    <citation type="journal article" date="2002" name="Nat. Neurosci.">
        <title>The olfactory receptor gene superfamily of the mouse.</title>
        <authorList>
            <person name="Zhang X."/>
            <person name="Firestein S."/>
        </authorList>
    </citation>
    <scope>NUCLEOTIDE SEQUENCE [GENOMIC DNA]</scope>
</reference>
<reference key="3">
    <citation type="journal article" date="2002" name="Hum. Mol. Genet.">
        <title>Different evolutionary processes shaped the mouse and human olfactory receptor gene families.</title>
        <authorList>
            <person name="Young J.M."/>
            <person name="Friedman C."/>
            <person name="Williams E.M."/>
            <person name="Ross J.A."/>
            <person name="Tonnes-Priddy L."/>
            <person name="Trask B.J."/>
        </authorList>
    </citation>
    <scope>NUCLEOTIDE SEQUENCE [GENOMIC DNA]</scope>
</reference>
<reference key="4">
    <citation type="journal article" date="2002" name="Hum. Mol. Genet.">
        <authorList>
            <person name="Young J.M."/>
            <person name="Friedman C."/>
            <person name="Williams E.M."/>
            <person name="Ross J.A."/>
            <person name="Tonnes-Priddy L."/>
            <person name="Trask B.J."/>
        </authorList>
    </citation>
    <scope>ERRATUM OF PUBMED:11875048</scope>
</reference>
<reference key="5">
    <citation type="journal article" date="1996" name="Proc. Natl. Acad. Sci. U.S.A.">
        <title>The chromosomal distribution of mouse odorant receptor genes.</title>
        <authorList>
            <person name="Sullivan S.L."/>
            <person name="Adamson M.C."/>
            <person name="Ressler K.J."/>
            <person name="Kozak C.A."/>
            <person name="Buck L.B."/>
        </authorList>
    </citation>
    <scope>NUCLEOTIDE SEQUENCE [GENOMIC DNA] OF 126-237</scope>
    <source>
        <strain>C57BL/6J</strain>
    </source>
</reference>
<organism>
    <name type="scientific">Mus musculus</name>
    <name type="common">Mouse</name>
    <dbReference type="NCBI Taxonomy" id="10090"/>
    <lineage>
        <taxon>Eukaryota</taxon>
        <taxon>Metazoa</taxon>
        <taxon>Chordata</taxon>
        <taxon>Craniata</taxon>
        <taxon>Vertebrata</taxon>
        <taxon>Euteleostomi</taxon>
        <taxon>Mammalia</taxon>
        <taxon>Eutheria</taxon>
        <taxon>Euarchontoglires</taxon>
        <taxon>Glires</taxon>
        <taxon>Rodentia</taxon>
        <taxon>Myomorpha</taxon>
        <taxon>Muroidea</taxon>
        <taxon>Muridae</taxon>
        <taxon>Murinae</taxon>
        <taxon>Mus</taxon>
        <taxon>Mus</taxon>
    </lineage>
</organism>
<keyword id="KW-1003">Cell membrane</keyword>
<keyword id="KW-1015">Disulfide bond</keyword>
<keyword id="KW-0297">G-protein coupled receptor</keyword>
<keyword id="KW-0325">Glycoprotein</keyword>
<keyword id="KW-0472">Membrane</keyword>
<keyword id="KW-0552">Olfaction</keyword>
<keyword id="KW-0675">Receptor</keyword>
<keyword id="KW-1185">Reference proteome</keyword>
<keyword id="KW-0716">Sensory transduction</keyword>
<keyword id="KW-0807">Transducer</keyword>
<keyword id="KW-0812">Transmembrane</keyword>
<keyword id="KW-1133">Transmembrane helix</keyword>
<evidence type="ECO:0000255" key="1"/>
<evidence type="ECO:0000255" key="2">
    <source>
        <dbReference type="PROSITE-ProRule" id="PRU00521"/>
    </source>
</evidence>
<evidence type="ECO:0000305" key="3"/>
<evidence type="ECO:0000312" key="4">
    <source>
        <dbReference type="MGI" id="MGI:2660713"/>
    </source>
</evidence>
<gene>
    <name evidence="4" type="primary">Or10n1</name>
    <name evidence="4" type="synonym">Mor224-4</name>
    <name evidence="4" type="synonym">Olfr148</name>
    <name type="synonym">Olfr7</name>
</gene>
<dbReference type="EMBL" id="AF282301">
    <property type="protein sequence ID" value="AAG39886.1"/>
    <property type="molecule type" value="Genomic_DNA"/>
</dbReference>
<dbReference type="EMBL" id="AY073592">
    <property type="protein sequence ID" value="AAL61255.1"/>
    <property type="molecule type" value="Genomic_DNA"/>
</dbReference>
<dbReference type="EMBL" id="AY318151">
    <property type="protein sequence ID" value="AAP71423.1"/>
    <property type="molecule type" value="Genomic_DNA"/>
</dbReference>
<dbReference type="EMBL" id="U28776">
    <property type="protein sequence ID" value="AAC52399.1"/>
    <property type="molecule type" value="Genomic_DNA"/>
</dbReference>
<dbReference type="CCDS" id="CCDS23053.1"/>
<dbReference type="RefSeq" id="NP_666716.1">
    <property type="nucleotide sequence ID" value="NM_146505.1"/>
</dbReference>
<dbReference type="SMR" id="Q60887"/>
<dbReference type="FunCoup" id="Q60887">
    <property type="interactions" value="1255"/>
</dbReference>
<dbReference type="STRING" id="10090.ENSMUSP00000150761"/>
<dbReference type="GlyCosmos" id="Q60887">
    <property type="glycosylation" value="1 site, No reported glycans"/>
</dbReference>
<dbReference type="GlyGen" id="Q60887">
    <property type="glycosylation" value="1 site"/>
</dbReference>
<dbReference type="iPTMnet" id="Q60887"/>
<dbReference type="PhosphoSitePlus" id="Q60887"/>
<dbReference type="PaxDb" id="10090-ENSMUSP00000096473"/>
<dbReference type="ProteomicsDB" id="294172"/>
<dbReference type="Ensembl" id="ENSMUST00000050807.7">
    <property type="protein sequence ID" value="ENSMUSP00000096473.3"/>
    <property type="gene ID" value="ENSMUSG00000048299.9"/>
</dbReference>
<dbReference type="Ensembl" id="ENSMUST00000216801.3">
    <property type="protein sequence ID" value="ENSMUSP00000150761.2"/>
    <property type="gene ID" value="ENSMUSG00000048299.9"/>
</dbReference>
<dbReference type="GeneID" id="258498"/>
<dbReference type="KEGG" id="mmu:258498"/>
<dbReference type="UCSC" id="uc009oyg.1">
    <property type="organism name" value="mouse"/>
</dbReference>
<dbReference type="AGR" id="MGI:2660713"/>
<dbReference type="CTD" id="258498"/>
<dbReference type="MGI" id="MGI:2660713">
    <property type="gene designation" value="Or10n1"/>
</dbReference>
<dbReference type="VEuPathDB" id="HostDB:ENSMUSG00000048299"/>
<dbReference type="eggNOG" id="ENOG502SH9P">
    <property type="taxonomic scope" value="Eukaryota"/>
</dbReference>
<dbReference type="GeneTree" id="ENSGT01050000244869"/>
<dbReference type="HOGENOM" id="CLU_012526_8_1_1"/>
<dbReference type="InParanoid" id="Q60887"/>
<dbReference type="OMA" id="IIYLQPA"/>
<dbReference type="OrthoDB" id="9442978at2759"/>
<dbReference type="PhylomeDB" id="Q60887"/>
<dbReference type="TreeFam" id="TF336512"/>
<dbReference type="BioGRID-ORCS" id="258498">
    <property type="hits" value="3 hits in 70 CRISPR screens"/>
</dbReference>
<dbReference type="PRO" id="PR:Q60887"/>
<dbReference type="Proteomes" id="UP000000589">
    <property type="component" value="Chromosome 9"/>
</dbReference>
<dbReference type="RNAct" id="Q60887">
    <property type="molecule type" value="protein"/>
</dbReference>
<dbReference type="Bgee" id="ENSMUSG00000048299">
    <property type="expression patterns" value="Expressed in vomeronasal organ and 6 other cell types or tissues"/>
</dbReference>
<dbReference type="ExpressionAtlas" id="Q60887">
    <property type="expression patterns" value="differential"/>
</dbReference>
<dbReference type="GO" id="GO:0016020">
    <property type="term" value="C:membrane"/>
    <property type="evidence" value="ECO:0000247"/>
    <property type="project" value="MGI"/>
</dbReference>
<dbReference type="GO" id="GO:0005886">
    <property type="term" value="C:plasma membrane"/>
    <property type="evidence" value="ECO:0007669"/>
    <property type="project" value="UniProtKB-SubCell"/>
</dbReference>
<dbReference type="GO" id="GO:0004930">
    <property type="term" value="F:G protein-coupled receptor activity"/>
    <property type="evidence" value="ECO:0007669"/>
    <property type="project" value="UniProtKB-KW"/>
</dbReference>
<dbReference type="GO" id="GO:0004984">
    <property type="term" value="F:olfactory receptor activity"/>
    <property type="evidence" value="ECO:0000247"/>
    <property type="project" value="MGI"/>
</dbReference>
<dbReference type="GO" id="GO:0007186">
    <property type="term" value="P:G protein-coupled receptor signaling pathway"/>
    <property type="evidence" value="ECO:0000247"/>
    <property type="project" value="MGI"/>
</dbReference>
<dbReference type="GO" id="GO:0007608">
    <property type="term" value="P:sensory perception of smell"/>
    <property type="evidence" value="ECO:0000247"/>
    <property type="project" value="MGI"/>
</dbReference>
<dbReference type="CDD" id="cd15228">
    <property type="entry name" value="7tmA_OR10D-like"/>
    <property type="match status" value="1"/>
</dbReference>
<dbReference type="FunFam" id="1.10.1220.70:FF:000001">
    <property type="entry name" value="Olfactory receptor"/>
    <property type="match status" value="1"/>
</dbReference>
<dbReference type="FunFam" id="1.20.1070.10:FF:000001">
    <property type="entry name" value="Olfactory receptor"/>
    <property type="match status" value="1"/>
</dbReference>
<dbReference type="Gene3D" id="1.20.1070.10">
    <property type="entry name" value="Rhodopsin 7-helix transmembrane proteins"/>
    <property type="match status" value="1"/>
</dbReference>
<dbReference type="InterPro" id="IPR000276">
    <property type="entry name" value="GPCR_Rhodpsn"/>
</dbReference>
<dbReference type="InterPro" id="IPR017452">
    <property type="entry name" value="GPCR_Rhodpsn_7TM"/>
</dbReference>
<dbReference type="InterPro" id="IPR000725">
    <property type="entry name" value="Olfact_rcpt"/>
</dbReference>
<dbReference type="PANTHER" id="PTHR26453">
    <property type="entry name" value="OLFACTORY RECEPTOR"/>
    <property type="match status" value="1"/>
</dbReference>
<dbReference type="Pfam" id="PF13853">
    <property type="entry name" value="7tm_4"/>
    <property type="match status" value="1"/>
</dbReference>
<dbReference type="PRINTS" id="PR00237">
    <property type="entry name" value="GPCRRHODOPSN"/>
</dbReference>
<dbReference type="PRINTS" id="PR00245">
    <property type="entry name" value="OLFACTORYR"/>
</dbReference>
<dbReference type="SUPFAM" id="SSF81321">
    <property type="entry name" value="Family A G protein-coupled receptor-like"/>
    <property type="match status" value="1"/>
</dbReference>
<dbReference type="PROSITE" id="PS50262">
    <property type="entry name" value="G_PROTEIN_RECEP_F1_2"/>
    <property type="match status" value="1"/>
</dbReference>
<protein>
    <recommendedName>
        <fullName evidence="3">Olfactory receptor 10N1</fullName>
    </recommendedName>
    <alternativeName>
        <fullName>Odorant receptor M30</fullName>
    </alternativeName>
    <alternativeName>
        <fullName>Olfactory receptor 148</fullName>
    </alternativeName>
    <alternativeName>
        <fullName>Olfactory receptor 224-4</fullName>
    </alternativeName>
    <alternativeName>
        <fullName>Olfactory receptor 7F</fullName>
    </alternativeName>
</protein>
<comment type="function">
    <text evidence="3">Odorant receptor.</text>
</comment>
<comment type="subcellular location">
    <subcellularLocation>
        <location evidence="3">Cell membrane</location>
        <topology evidence="1">Multi-pass membrane protein</topology>
    </subcellularLocation>
</comment>
<comment type="similarity">
    <text evidence="2">Belongs to the G-protein coupled receptor 1 family.</text>
</comment>